<evidence type="ECO:0000250" key="1">
    <source>
        <dbReference type="UniProtKB" id="P55851"/>
    </source>
</evidence>
<evidence type="ECO:0000250" key="2">
    <source>
        <dbReference type="UniProtKB" id="P70406"/>
    </source>
</evidence>
<evidence type="ECO:0000255" key="3"/>
<evidence type="ECO:0000255" key="4">
    <source>
        <dbReference type="PROSITE-ProRule" id="PRU00282"/>
    </source>
</evidence>
<evidence type="ECO:0000305" key="5"/>
<dbReference type="EMBL" id="CR860955">
    <property type="protein sequence ID" value="CAH93058.1"/>
    <property type="molecule type" value="mRNA"/>
</dbReference>
<dbReference type="RefSeq" id="NP_001126811.1">
    <property type="nucleotide sequence ID" value="NM_001133339.1"/>
</dbReference>
<dbReference type="FunCoup" id="Q5R5A8">
    <property type="interactions" value="524"/>
</dbReference>
<dbReference type="STRING" id="9601.ENSPPYP00000004192"/>
<dbReference type="Ensembl" id="ENSPPYT00000052834.1">
    <property type="protein sequence ID" value="ENSPPYP00000035506.1"/>
    <property type="gene ID" value="ENSPPYG00000003668.2"/>
</dbReference>
<dbReference type="GeneID" id="100173815"/>
<dbReference type="KEGG" id="pon:100173815"/>
<dbReference type="CTD" id="7351"/>
<dbReference type="eggNOG" id="KOG0753">
    <property type="taxonomic scope" value="Eukaryota"/>
</dbReference>
<dbReference type="GeneTree" id="ENSGT00940000159524"/>
<dbReference type="InParanoid" id="Q5R5A8"/>
<dbReference type="OMA" id="HARRYCS"/>
<dbReference type="OrthoDB" id="448427at2759"/>
<dbReference type="Proteomes" id="UP000001595">
    <property type="component" value="Chromosome 11"/>
</dbReference>
<dbReference type="GO" id="GO:0005743">
    <property type="term" value="C:mitochondrial inner membrane"/>
    <property type="evidence" value="ECO:0007669"/>
    <property type="project" value="UniProtKB-SubCell"/>
</dbReference>
<dbReference type="GO" id="GO:0015297">
    <property type="term" value="F:antiporter activity"/>
    <property type="evidence" value="ECO:0000250"/>
    <property type="project" value="UniProtKB"/>
</dbReference>
<dbReference type="GO" id="GO:0015108">
    <property type="term" value="F:chloride transmembrane transporter activity"/>
    <property type="evidence" value="ECO:0007669"/>
    <property type="project" value="Ensembl"/>
</dbReference>
<dbReference type="GO" id="GO:0019003">
    <property type="term" value="F:GDP binding"/>
    <property type="evidence" value="ECO:0007669"/>
    <property type="project" value="Ensembl"/>
</dbReference>
<dbReference type="GO" id="GO:0015183">
    <property type="term" value="F:L-aspartate transmembrane transporter activity"/>
    <property type="evidence" value="ECO:0000250"/>
    <property type="project" value="UniProtKB"/>
</dbReference>
<dbReference type="GO" id="GO:0015140">
    <property type="term" value="F:malate transmembrane transporter activity"/>
    <property type="evidence" value="ECO:0000250"/>
    <property type="project" value="UniProtKB"/>
</dbReference>
<dbReference type="GO" id="GO:0015131">
    <property type="term" value="F:oxaloacetate transmembrane transporter activity"/>
    <property type="evidence" value="ECO:0000250"/>
    <property type="project" value="UniProtKB"/>
</dbReference>
<dbReference type="GO" id="GO:0140787">
    <property type="term" value="F:phosphate ion uniporter activity"/>
    <property type="evidence" value="ECO:0000250"/>
    <property type="project" value="UniProtKB"/>
</dbReference>
<dbReference type="GO" id="GO:0042803">
    <property type="term" value="F:protein homodimerization activity"/>
    <property type="evidence" value="ECO:0000250"/>
    <property type="project" value="UniProtKB"/>
</dbReference>
<dbReference type="GO" id="GO:0015078">
    <property type="term" value="F:proton transmembrane transporter activity"/>
    <property type="evidence" value="ECO:0000250"/>
    <property type="project" value="UniProtKB"/>
</dbReference>
<dbReference type="GO" id="GO:0008271">
    <property type="term" value="F:secondary active sulfate transmembrane transporter activity"/>
    <property type="evidence" value="ECO:0000250"/>
    <property type="project" value="UniProtKB"/>
</dbReference>
<dbReference type="GO" id="GO:0015740">
    <property type="term" value="P:C4-dicarboxylate transport"/>
    <property type="evidence" value="ECO:0000250"/>
    <property type="project" value="UniProtKB"/>
</dbReference>
<dbReference type="GO" id="GO:0071333">
    <property type="term" value="P:cellular response to glucose stimulus"/>
    <property type="evidence" value="ECO:0000250"/>
    <property type="project" value="UniProtKB"/>
</dbReference>
<dbReference type="GO" id="GO:0006541">
    <property type="term" value="P:glutamine metabolic process"/>
    <property type="evidence" value="ECO:0000250"/>
    <property type="project" value="UniProtKB"/>
</dbReference>
<dbReference type="GO" id="GO:0006096">
    <property type="term" value="P:glycolytic process"/>
    <property type="evidence" value="ECO:0000250"/>
    <property type="project" value="UniProtKB"/>
</dbReference>
<dbReference type="GO" id="GO:0015909">
    <property type="term" value="P:long-chain fatty acid transport"/>
    <property type="evidence" value="ECO:0007669"/>
    <property type="project" value="Ensembl"/>
</dbReference>
<dbReference type="GO" id="GO:0030225">
    <property type="term" value="P:macrophage differentiation"/>
    <property type="evidence" value="ECO:0000250"/>
    <property type="project" value="UniProtKB"/>
</dbReference>
<dbReference type="GO" id="GO:0000266">
    <property type="term" value="P:mitochondrial fission"/>
    <property type="evidence" value="ECO:0000250"/>
    <property type="project" value="UniProtKB"/>
</dbReference>
<dbReference type="GO" id="GO:1990542">
    <property type="term" value="P:mitochondrial transmembrane transport"/>
    <property type="evidence" value="ECO:0000250"/>
    <property type="project" value="UniProtKB"/>
</dbReference>
<dbReference type="GO" id="GO:0110099">
    <property type="term" value="P:negative regulation of calcium import into the mitochondrion"/>
    <property type="evidence" value="ECO:0007669"/>
    <property type="project" value="Ensembl"/>
</dbReference>
<dbReference type="GO" id="GO:0043524">
    <property type="term" value="P:negative regulation of neuron apoptotic process"/>
    <property type="evidence" value="ECO:0007669"/>
    <property type="project" value="Ensembl"/>
</dbReference>
<dbReference type="GO" id="GO:0120162">
    <property type="term" value="P:positive regulation of cold-induced thermogenesis"/>
    <property type="evidence" value="ECO:0007669"/>
    <property type="project" value="Ensembl"/>
</dbReference>
<dbReference type="GO" id="GO:0072593">
    <property type="term" value="P:reactive oxygen species metabolic process"/>
    <property type="evidence" value="ECO:0000250"/>
    <property type="project" value="UniProtKB"/>
</dbReference>
<dbReference type="GO" id="GO:0051881">
    <property type="term" value="P:regulation of mitochondrial membrane potential"/>
    <property type="evidence" value="ECO:0007669"/>
    <property type="project" value="Ensembl"/>
</dbReference>
<dbReference type="GO" id="GO:0001666">
    <property type="term" value="P:response to hypoxia"/>
    <property type="evidence" value="ECO:0007669"/>
    <property type="project" value="Ensembl"/>
</dbReference>
<dbReference type="FunFam" id="1.50.40.10:FF:000008">
    <property type="entry name" value="Mitochondrial uncoupling protein 2"/>
    <property type="match status" value="1"/>
</dbReference>
<dbReference type="Gene3D" id="1.50.40.10">
    <property type="entry name" value="Mitochondrial carrier domain"/>
    <property type="match status" value="1"/>
</dbReference>
<dbReference type="InterPro" id="IPR002067">
    <property type="entry name" value="Mit_carrier"/>
</dbReference>
<dbReference type="InterPro" id="IPR050391">
    <property type="entry name" value="Mito_Metabolite_Transporter"/>
</dbReference>
<dbReference type="InterPro" id="IPR018108">
    <property type="entry name" value="Mitochondrial_sb/sol_carrier"/>
</dbReference>
<dbReference type="InterPro" id="IPR023395">
    <property type="entry name" value="Mt_carrier_dom_sf"/>
</dbReference>
<dbReference type="PANTHER" id="PTHR45618">
    <property type="entry name" value="MITOCHONDRIAL DICARBOXYLATE CARRIER-RELATED"/>
    <property type="match status" value="1"/>
</dbReference>
<dbReference type="Pfam" id="PF00153">
    <property type="entry name" value="Mito_carr"/>
    <property type="match status" value="3"/>
</dbReference>
<dbReference type="PRINTS" id="PR00784">
    <property type="entry name" value="MTUNCOUPLING"/>
</dbReference>
<dbReference type="SUPFAM" id="SSF103506">
    <property type="entry name" value="Mitochondrial carrier"/>
    <property type="match status" value="1"/>
</dbReference>
<dbReference type="PROSITE" id="PS50920">
    <property type="entry name" value="SOLCAR"/>
    <property type="match status" value="3"/>
</dbReference>
<reference key="1">
    <citation type="submission" date="2004-11" db="EMBL/GenBank/DDBJ databases">
        <authorList>
            <consortium name="The German cDNA consortium"/>
        </authorList>
    </citation>
    <scope>NUCLEOTIDE SEQUENCE [LARGE SCALE MRNA]</scope>
    <source>
        <tissue>Liver</tissue>
    </source>
</reference>
<organism>
    <name type="scientific">Pongo abelii</name>
    <name type="common">Sumatran orangutan</name>
    <name type="synonym">Pongo pygmaeus abelii</name>
    <dbReference type="NCBI Taxonomy" id="9601"/>
    <lineage>
        <taxon>Eukaryota</taxon>
        <taxon>Metazoa</taxon>
        <taxon>Chordata</taxon>
        <taxon>Craniata</taxon>
        <taxon>Vertebrata</taxon>
        <taxon>Euteleostomi</taxon>
        <taxon>Mammalia</taxon>
        <taxon>Eutheria</taxon>
        <taxon>Euarchontoglires</taxon>
        <taxon>Primates</taxon>
        <taxon>Haplorrhini</taxon>
        <taxon>Catarrhini</taxon>
        <taxon>Hominidae</taxon>
        <taxon>Pongo</taxon>
    </lineage>
</organism>
<feature type="chain" id="PRO_0000290580" description="Dicarboxylate carrier UCP2">
    <location>
        <begin position="1"/>
        <end position="309"/>
    </location>
</feature>
<feature type="topological domain" description="Mitochondrial intermembrane" evidence="5">
    <location>
        <begin position="1"/>
        <end position="16"/>
    </location>
</feature>
<feature type="transmembrane region" description="Helical; Name=1" evidence="2">
    <location>
        <begin position="17"/>
        <end position="40"/>
    </location>
</feature>
<feature type="topological domain" description="Mitochondrial matrix" evidence="5">
    <location>
        <begin position="41"/>
        <end position="77"/>
    </location>
</feature>
<feature type="transmembrane region" description="Helical; Name=2" evidence="2">
    <location>
        <begin position="78"/>
        <end position="103"/>
    </location>
</feature>
<feature type="topological domain" description="Mitochondrial intermembrane" evidence="5">
    <location>
        <begin position="104"/>
        <end position="119"/>
    </location>
</feature>
<feature type="transmembrane region" description="Helical; Name=3" evidence="2">
    <location>
        <begin position="120"/>
        <end position="145"/>
    </location>
</feature>
<feature type="topological domain" description="Mitochondrial matrix" evidence="5">
    <location>
        <begin position="146"/>
        <end position="173"/>
    </location>
</feature>
<feature type="transmembrane region" description="Helical; Name=4" evidence="2">
    <location>
        <begin position="174"/>
        <end position="199"/>
    </location>
</feature>
<feature type="topological domain" description="Mitochondrial intermembrane" evidence="5">
    <location>
        <begin position="200"/>
        <end position="217"/>
    </location>
</feature>
<feature type="transmembrane region" description="Helical; Name=5" evidence="2">
    <location>
        <begin position="218"/>
        <end position="242"/>
    </location>
</feature>
<feature type="topological domain" description="Mitochondrial matrix" evidence="5">
    <location>
        <begin position="243"/>
        <end position="268"/>
    </location>
</feature>
<feature type="transmembrane region" description="Helical; Name=6" evidence="2">
    <location>
        <begin position="269"/>
        <end position="294"/>
    </location>
</feature>
<feature type="topological domain" description="Mitochondrial intermembrane" evidence="5">
    <location>
        <begin position="295"/>
        <end position="309"/>
    </location>
</feature>
<feature type="repeat" description="Solcar 1" evidence="4">
    <location>
        <begin position="11"/>
        <end position="106"/>
    </location>
</feature>
<feature type="repeat" description="Solcar 2" evidence="4">
    <location>
        <begin position="114"/>
        <end position="203"/>
    </location>
</feature>
<feature type="repeat" description="Solcar 3" evidence="4">
    <location>
        <begin position="212"/>
        <end position="297"/>
    </location>
</feature>
<feature type="region of interest" description="Important for interaction with long-chain fatty acids" evidence="2">
    <location>
        <begin position="16"/>
        <end position="63"/>
    </location>
</feature>
<feature type="region of interest" description="Important for interaction with long-chain fatty acids" evidence="2">
    <location>
        <begin position="278"/>
        <end position="285"/>
    </location>
</feature>
<feature type="site" description="Important for inhibition by GDP" evidence="2">
    <location>
        <position position="141"/>
    </location>
</feature>
<feature type="site" description="Important for inhibition by GDP" evidence="2">
    <location>
        <position position="185"/>
    </location>
</feature>
<name>UCP2_PONAB</name>
<proteinExistence type="evidence at transcript level"/>
<keyword id="KW-0472">Membrane</keyword>
<keyword id="KW-0496">Mitochondrion</keyword>
<keyword id="KW-0999">Mitochondrion inner membrane</keyword>
<keyword id="KW-1185">Reference proteome</keyword>
<keyword id="KW-0677">Repeat</keyword>
<keyword id="KW-0812">Transmembrane</keyword>
<keyword id="KW-1133">Transmembrane helix</keyword>
<keyword id="KW-0813">Transport</keyword>
<comment type="function">
    <text evidence="1 2">Antiporter that exports dicarboxylate intermediates of the Krebs cycle in exchange for phosphate plus a proton across the inner membrane of mitochondria, a process driven by mitochondrial motive force with an overall impact on glycolysis, glutaminolysis and glutathione-dependent redox balance. Continuous export of oxaloacetate and related four-carbon dicarboxylates from mitochondrial matrix into the cytosol negatively regulates the oxidation of acetyl-CoA substrates via the Krebs cycle lowering the ATP/ADP ratio and reactive oxygen species (ROS) production (By similarity). May mediate inducible proton entry into the mitochondrial matrix affecting ATP turnover as a protection mechanism against oxidative stress. The proton currents are most likely associated with fatty acid flipping across the inner membrane of mitochondria in a metabolic process regulated by free fatty acids and purine nucleotides (By similarity). Regulates the use of glucose as a source of energy. Required for glucose-induced DRP1-dependent mitochondrial fission and neuron activation in the ventromedial nucleus of the hypothalamus (VMH). This mitochondrial adaptation mechanism modulates the VMH pool of glucose-excited neurons with an impact on systemic glucose homeostasis. Regulates ROS levels and metabolic reprogramming of macrophages during the resolution phase of inflammation. Attenuates ROS production in response to IL33 to preserve the integrity of the Krebs cycle required for persistent production of itaconate and subsequent GATA3-dependent differentiation of inflammation-resolving alternatively activated macrophages (By similarity). Can unidirectionally transport anions including L-malate, L-aspartate, phosphate and chloride ions (By similarity). Does not mediate adaptive thermogenesis (By similarity).</text>
</comment>
<comment type="catalytic activity">
    <reaction evidence="1">
        <text>L-aspartate(out) + phosphate(in) + H(+)(in) = L-aspartate(in) + phosphate(out) + H(+)(out)</text>
        <dbReference type="Rhea" id="RHEA:73307"/>
        <dbReference type="ChEBI" id="CHEBI:15378"/>
        <dbReference type="ChEBI" id="CHEBI:29991"/>
        <dbReference type="ChEBI" id="CHEBI:43474"/>
    </reaction>
</comment>
<comment type="catalytic activity">
    <reaction evidence="1">
        <text>oxaloacetate(out) + phosphate(in) + H(+)(in) = oxaloacetate(in) + phosphate(out) + H(+)(out)</text>
        <dbReference type="Rhea" id="RHEA:73303"/>
        <dbReference type="ChEBI" id="CHEBI:15378"/>
        <dbReference type="ChEBI" id="CHEBI:16452"/>
        <dbReference type="ChEBI" id="CHEBI:43474"/>
    </reaction>
</comment>
<comment type="catalytic activity">
    <reaction evidence="1">
        <text>(S)-malate(out) + phosphate(in) + H(+)(in) = (S)-malate(in) + phosphate(out) + H(+)(out)</text>
        <dbReference type="Rhea" id="RHEA:73299"/>
        <dbReference type="ChEBI" id="CHEBI:15378"/>
        <dbReference type="ChEBI" id="CHEBI:15589"/>
        <dbReference type="ChEBI" id="CHEBI:43474"/>
    </reaction>
</comment>
<comment type="catalytic activity">
    <reaction evidence="1">
        <text>malonate(out) + phosphate(in) + H(+)(in) = malonate(in) + phosphate(out) + H(+)(out)</text>
        <dbReference type="Rhea" id="RHEA:73387"/>
        <dbReference type="ChEBI" id="CHEBI:15378"/>
        <dbReference type="ChEBI" id="CHEBI:15792"/>
        <dbReference type="ChEBI" id="CHEBI:43474"/>
    </reaction>
</comment>
<comment type="catalytic activity">
    <reaction evidence="1">
        <text>sulfate(out) + phosphate(in) + H(+)(in) = sulfate(in) + phosphate(out) + H(+)(out)</text>
        <dbReference type="Rhea" id="RHEA:73391"/>
        <dbReference type="ChEBI" id="CHEBI:15378"/>
        <dbReference type="ChEBI" id="CHEBI:16189"/>
        <dbReference type="ChEBI" id="CHEBI:43474"/>
    </reaction>
</comment>
<comment type="catalytic activity">
    <reaction evidence="1">
        <text>(S)-malate(out) = (S)-malate(in)</text>
        <dbReference type="Rhea" id="RHEA:74555"/>
        <dbReference type="ChEBI" id="CHEBI:15589"/>
    </reaction>
</comment>
<comment type="catalytic activity">
    <reaction evidence="1">
        <text>L-aspartate(out) = L-aspartate(in)</text>
        <dbReference type="Rhea" id="RHEA:66332"/>
        <dbReference type="ChEBI" id="CHEBI:29991"/>
    </reaction>
</comment>
<comment type="catalytic activity">
    <reaction evidence="1">
        <text>phosphate(in) = phosphate(out)</text>
        <dbReference type="Rhea" id="RHEA:32823"/>
        <dbReference type="ChEBI" id="CHEBI:43474"/>
    </reaction>
</comment>
<comment type="catalytic activity">
    <reaction evidence="1">
        <text>chloride(in) = chloride(out)</text>
        <dbReference type="Rhea" id="RHEA:29823"/>
        <dbReference type="ChEBI" id="CHEBI:17996"/>
    </reaction>
</comment>
<comment type="catalytic activity">
    <reaction evidence="1 2">
        <text>H(+)(in) = H(+)(out)</text>
        <dbReference type="Rhea" id="RHEA:34979"/>
        <dbReference type="ChEBI" id="CHEBI:15378"/>
    </reaction>
</comment>
<comment type="catalytic activity">
    <reaction evidence="2">
        <text>a long-chain fatty acid(out) = a long-chain fatty acid(in)</text>
        <dbReference type="Rhea" id="RHEA:39283"/>
        <dbReference type="ChEBI" id="CHEBI:57560"/>
    </reaction>
</comment>
<comment type="subunit">
    <text evidence="1">Homotetramer. Adopts an asymmetrical dimer of dimers functional form. Interacts with MICU1 (when methylated); leading to decrease the calcium sensitivity of MICU1.</text>
</comment>
<comment type="subcellular location">
    <subcellularLocation>
        <location evidence="2">Mitochondrion inner membrane</location>
        <topology evidence="3">Multi-pass membrane protein</topology>
    </subcellularLocation>
</comment>
<comment type="domain">
    <text evidence="2">The GDP-binding domain is located within the hydrophilic cavity, with GDP phosphates likely forming salt bridges with the charged residues, Lys-141 and Arg-185.</text>
</comment>
<comment type="domain">
    <text evidence="2">The long-chain fatty acid-binding domain consists of an hydrophobic groove between peripheral transmembrane helices 1 and 6 near the matrix side.</text>
</comment>
<comment type="similarity">
    <text evidence="5">Belongs to the mitochondrial carrier (TC 2.A.29) family.</text>
</comment>
<comment type="caution">
    <text evidence="1 2">The role of UCP2/SLC25A8 in mitochondrial proton conductance is a matter of debate. It was initially suggested that it mediates proton leak that increases net proton conductance in response to ROS such as reactive alkenals generated during fatty acid oxidation in mitochondria. By lowering the proton motive force, it would provide for feedback control of mitochondrial ROS metabolism limiting extensive ROS production and protecting cells against oxidative stress. This activity and its potential regulation by ubiquinones and nucleotides was disputed by later studies, which failed to reproduce the effect on proton conductance under physiological conditions. Rather than 'uncoupling' the link between electron transfer and ATP synthesis, it may couple metabolite transport to proton flux to allow for optimal ATP turnover.</text>
</comment>
<gene>
    <name type="primary">UCP2</name>
    <name type="synonym">SLC25A8</name>
</gene>
<accession>Q5R5A8</accession>
<sequence>MVGFKATDVPPTATVKFLGAGTAACIADLITFPLDTAKVRLQIQGESQGPVHATASAQYRGVMGTILTMVRTEGPRSLYNGLVAGLQRQMSFASVRIGLYDSVKQFYTKGSEHASIGSRLLAGSTTGALAVAVAQPTDVVKVRFQAQARAGGGRRYQSTVNAYKTIAREEGFRGLWKGTSPNVARNAIVNCAELVTYDLIKDALLKANLMTDDLPCHFTSAFGAGFCTTVIASPVDVVKTRYMNSALGQYSSAGHCALTMLQKEGPRAFYKGFMPSFLRLGSWNVVMFVTYEQLKRALMAACTSREAPF</sequence>
<protein>
    <recommendedName>
        <fullName evidence="1">Dicarboxylate carrier UCP2</fullName>
    </recommendedName>
    <alternativeName>
        <fullName>Mitochondrial uncoupling protein 2</fullName>
        <shortName>UCP 2</shortName>
    </alternativeName>
    <alternativeName>
        <fullName>Solute carrier family 25 member 8</fullName>
    </alternativeName>
</protein>